<accession>B7HDU7</accession>
<organism>
    <name type="scientific">Bacillus cereus (strain B4264)</name>
    <dbReference type="NCBI Taxonomy" id="405532"/>
    <lineage>
        <taxon>Bacteria</taxon>
        <taxon>Bacillati</taxon>
        <taxon>Bacillota</taxon>
        <taxon>Bacilli</taxon>
        <taxon>Bacillales</taxon>
        <taxon>Bacillaceae</taxon>
        <taxon>Bacillus</taxon>
        <taxon>Bacillus cereus group</taxon>
    </lineage>
</organism>
<reference key="1">
    <citation type="submission" date="2008-10" db="EMBL/GenBank/DDBJ databases">
        <title>Genome sequence of Bacillus cereus B4264.</title>
        <authorList>
            <person name="Dodson R.J."/>
            <person name="Durkin A.S."/>
            <person name="Rosovitz M.J."/>
            <person name="Rasko D.A."/>
            <person name="Hoffmaster A."/>
            <person name="Ravel J."/>
            <person name="Sutton G."/>
        </authorList>
    </citation>
    <scope>NUCLEOTIDE SEQUENCE [LARGE SCALE GENOMIC DNA]</scope>
    <source>
        <strain>B4264</strain>
    </source>
</reference>
<gene>
    <name evidence="1" type="primary">frr</name>
    <name type="ordered locus">BCB4264_A3922</name>
</gene>
<dbReference type="EMBL" id="CP001176">
    <property type="protein sequence ID" value="ACK62536.1"/>
    <property type="molecule type" value="Genomic_DNA"/>
</dbReference>
<dbReference type="RefSeq" id="WP_000531501.1">
    <property type="nucleotide sequence ID" value="NZ_VEHB01000002.1"/>
</dbReference>
<dbReference type="SMR" id="B7HDU7"/>
<dbReference type="GeneID" id="93007288"/>
<dbReference type="KEGG" id="bcb:BCB4264_A3922"/>
<dbReference type="HOGENOM" id="CLU_073981_2_0_9"/>
<dbReference type="Proteomes" id="UP000007096">
    <property type="component" value="Chromosome"/>
</dbReference>
<dbReference type="GO" id="GO:0005737">
    <property type="term" value="C:cytoplasm"/>
    <property type="evidence" value="ECO:0007669"/>
    <property type="project" value="UniProtKB-SubCell"/>
</dbReference>
<dbReference type="GO" id="GO:0043023">
    <property type="term" value="F:ribosomal large subunit binding"/>
    <property type="evidence" value="ECO:0007669"/>
    <property type="project" value="TreeGrafter"/>
</dbReference>
<dbReference type="GO" id="GO:0006415">
    <property type="term" value="P:translational termination"/>
    <property type="evidence" value="ECO:0007669"/>
    <property type="project" value="UniProtKB-UniRule"/>
</dbReference>
<dbReference type="CDD" id="cd00520">
    <property type="entry name" value="RRF"/>
    <property type="match status" value="1"/>
</dbReference>
<dbReference type="FunFam" id="1.10.132.20:FF:000001">
    <property type="entry name" value="Ribosome-recycling factor"/>
    <property type="match status" value="1"/>
</dbReference>
<dbReference type="FunFam" id="3.30.1360.40:FF:000001">
    <property type="entry name" value="Ribosome-recycling factor"/>
    <property type="match status" value="1"/>
</dbReference>
<dbReference type="Gene3D" id="3.30.1360.40">
    <property type="match status" value="1"/>
</dbReference>
<dbReference type="Gene3D" id="1.10.132.20">
    <property type="entry name" value="Ribosome-recycling factor"/>
    <property type="match status" value="1"/>
</dbReference>
<dbReference type="HAMAP" id="MF_00040">
    <property type="entry name" value="RRF"/>
    <property type="match status" value="1"/>
</dbReference>
<dbReference type="InterPro" id="IPR002661">
    <property type="entry name" value="Ribosome_recyc_fac"/>
</dbReference>
<dbReference type="InterPro" id="IPR023584">
    <property type="entry name" value="Ribosome_recyc_fac_dom"/>
</dbReference>
<dbReference type="InterPro" id="IPR036191">
    <property type="entry name" value="RRF_sf"/>
</dbReference>
<dbReference type="NCBIfam" id="TIGR00496">
    <property type="entry name" value="frr"/>
    <property type="match status" value="1"/>
</dbReference>
<dbReference type="PANTHER" id="PTHR20982:SF3">
    <property type="entry name" value="MITOCHONDRIAL RIBOSOME RECYCLING FACTOR PSEUDO 1"/>
    <property type="match status" value="1"/>
</dbReference>
<dbReference type="PANTHER" id="PTHR20982">
    <property type="entry name" value="RIBOSOME RECYCLING FACTOR"/>
    <property type="match status" value="1"/>
</dbReference>
<dbReference type="Pfam" id="PF01765">
    <property type="entry name" value="RRF"/>
    <property type="match status" value="1"/>
</dbReference>
<dbReference type="SUPFAM" id="SSF55194">
    <property type="entry name" value="Ribosome recycling factor, RRF"/>
    <property type="match status" value="1"/>
</dbReference>
<sequence>MGQQVLKSSNEKMEKAVAAYSRELATVRAGRANASVLDKVQVDYYGAPTPVVQLANITVPEARLLVIQPYDKTSIGDIEKAILKADLGLNPSNDGTVIRIAFPALTEERRRDLVKVVKKYAEEAKVAVRNVRRDGNDDLKKLEKAGEITEDDLRGYTEDIQKETDKYIAKVDEIAKNKEKEIMEV</sequence>
<proteinExistence type="inferred from homology"/>
<keyword id="KW-0963">Cytoplasm</keyword>
<keyword id="KW-0648">Protein biosynthesis</keyword>
<feature type="chain" id="PRO_1000194898" description="Ribosome-recycling factor">
    <location>
        <begin position="1"/>
        <end position="185"/>
    </location>
</feature>
<comment type="function">
    <text evidence="1">Responsible for the release of ribosomes from messenger RNA at the termination of protein biosynthesis. May increase the efficiency of translation by recycling ribosomes from one round of translation to another.</text>
</comment>
<comment type="subcellular location">
    <subcellularLocation>
        <location evidence="1">Cytoplasm</location>
    </subcellularLocation>
</comment>
<comment type="similarity">
    <text evidence="1">Belongs to the RRF family.</text>
</comment>
<protein>
    <recommendedName>
        <fullName evidence="1">Ribosome-recycling factor</fullName>
        <shortName evidence="1">RRF</shortName>
    </recommendedName>
    <alternativeName>
        <fullName evidence="1">Ribosome-releasing factor</fullName>
    </alternativeName>
</protein>
<evidence type="ECO:0000255" key="1">
    <source>
        <dbReference type="HAMAP-Rule" id="MF_00040"/>
    </source>
</evidence>
<name>RRF_BACC4</name>